<feature type="chain" id="PRO_0000090268" description="Triosephosphate isomerase">
    <location>
        <begin position="1"/>
        <end position="251"/>
    </location>
</feature>
<feature type="active site" description="Electrophile" evidence="1">
    <location>
        <position position="95"/>
    </location>
</feature>
<feature type="active site" description="Proton acceptor" evidence="1">
    <location>
        <position position="167"/>
    </location>
</feature>
<feature type="binding site" evidence="1">
    <location>
        <begin position="9"/>
        <end position="11"/>
    </location>
    <ligand>
        <name>substrate</name>
    </ligand>
</feature>
<feature type="binding site" evidence="1">
    <location>
        <position position="173"/>
    </location>
    <ligand>
        <name>substrate</name>
    </ligand>
</feature>
<feature type="binding site" evidence="1">
    <location>
        <position position="212"/>
    </location>
    <ligand>
        <name>substrate</name>
    </ligand>
</feature>
<feature type="binding site" evidence="1">
    <location>
        <begin position="233"/>
        <end position="234"/>
    </location>
    <ligand>
        <name>substrate</name>
    </ligand>
</feature>
<gene>
    <name evidence="1" type="primary">tpiA</name>
    <name type="ordered locus">PA4748</name>
</gene>
<keyword id="KW-0963">Cytoplasm</keyword>
<keyword id="KW-0312">Gluconeogenesis</keyword>
<keyword id="KW-0324">Glycolysis</keyword>
<keyword id="KW-0413">Isomerase</keyword>
<keyword id="KW-1185">Reference proteome</keyword>
<protein>
    <recommendedName>
        <fullName evidence="1">Triosephosphate isomerase</fullName>
        <shortName evidence="1">TIM</shortName>
        <shortName evidence="1">TPI</shortName>
        <ecNumber evidence="1">5.3.1.1</ecNumber>
    </recommendedName>
    <alternativeName>
        <fullName evidence="1">Triose-phosphate isomerase</fullName>
    </alternativeName>
</protein>
<name>TPIS_PSEAE</name>
<reference key="1">
    <citation type="journal article" date="2000" name="Nature">
        <title>Complete genome sequence of Pseudomonas aeruginosa PAO1, an opportunistic pathogen.</title>
        <authorList>
            <person name="Stover C.K."/>
            <person name="Pham X.-Q.T."/>
            <person name="Erwin A.L."/>
            <person name="Mizoguchi S.D."/>
            <person name="Warrener P."/>
            <person name="Hickey M.J."/>
            <person name="Brinkman F.S.L."/>
            <person name="Hufnagle W.O."/>
            <person name="Kowalik D.J."/>
            <person name="Lagrou M."/>
            <person name="Garber R.L."/>
            <person name="Goltry L."/>
            <person name="Tolentino E."/>
            <person name="Westbrock-Wadman S."/>
            <person name="Yuan Y."/>
            <person name="Brody L.L."/>
            <person name="Coulter S.N."/>
            <person name="Folger K.R."/>
            <person name="Kas A."/>
            <person name="Larbig K."/>
            <person name="Lim R.M."/>
            <person name="Smith K.A."/>
            <person name="Spencer D.H."/>
            <person name="Wong G.K.-S."/>
            <person name="Wu Z."/>
            <person name="Paulsen I.T."/>
            <person name="Reizer J."/>
            <person name="Saier M.H. Jr."/>
            <person name="Hancock R.E.W."/>
            <person name="Lory S."/>
            <person name="Olson M.V."/>
        </authorList>
    </citation>
    <scope>NUCLEOTIDE SEQUENCE [LARGE SCALE GENOMIC DNA]</scope>
    <source>
        <strain>ATCC 15692 / DSM 22644 / CIP 104116 / JCM 14847 / LMG 12228 / 1C / PRS 101 / PAO1</strain>
    </source>
</reference>
<accession>Q9HV51</accession>
<comment type="function">
    <text evidence="1">Involved in the gluconeogenesis. Catalyzes stereospecifically the conversion of dihydroxyacetone phosphate (DHAP) to D-glyceraldehyde-3-phosphate (G3P).</text>
</comment>
<comment type="catalytic activity">
    <reaction evidence="1">
        <text>D-glyceraldehyde 3-phosphate = dihydroxyacetone phosphate</text>
        <dbReference type="Rhea" id="RHEA:18585"/>
        <dbReference type="ChEBI" id="CHEBI:57642"/>
        <dbReference type="ChEBI" id="CHEBI:59776"/>
        <dbReference type="EC" id="5.3.1.1"/>
    </reaction>
</comment>
<comment type="pathway">
    <text evidence="1">Carbohydrate biosynthesis; gluconeogenesis.</text>
</comment>
<comment type="pathway">
    <text evidence="1">Carbohydrate degradation; glycolysis; D-glyceraldehyde 3-phosphate from glycerone phosphate: step 1/1.</text>
</comment>
<comment type="subunit">
    <text evidence="1">Homodimer.</text>
</comment>
<comment type="subcellular location">
    <subcellularLocation>
        <location evidence="1">Cytoplasm</location>
    </subcellularLocation>
</comment>
<comment type="similarity">
    <text evidence="1">Belongs to the triosephosphate isomerase family.</text>
</comment>
<evidence type="ECO:0000255" key="1">
    <source>
        <dbReference type="HAMAP-Rule" id="MF_00147"/>
    </source>
</evidence>
<proteinExistence type="inferred from homology"/>
<sequence>MRRPLVAGNWKMHGTHSSVAELIKGLRQLALPSGVDVAVMPPCLFISQVIQGLAGKAIDVGAQNSAVEPMQGALTGETAPSQLADVGCSMVLVGHSERRLILGESDEVVSRKFAAAQSCGLVPVLCVGETRAEREAGKTLEVVARQLGSVIDELGVGAFARAVVAYEPVWAIGTGLTASPAQAQEVHAAIRAQLAAENAEVAKGVRLLYGGSVKAASAAELFGMPDIDGGLVGGASLNADEFGAICRAAGS</sequence>
<organism>
    <name type="scientific">Pseudomonas aeruginosa (strain ATCC 15692 / DSM 22644 / CIP 104116 / JCM 14847 / LMG 12228 / 1C / PRS 101 / PAO1)</name>
    <dbReference type="NCBI Taxonomy" id="208964"/>
    <lineage>
        <taxon>Bacteria</taxon>
        <taxon>Pseudomonadati</taxon>
        <taxon>Pseudomonadota</taxon>
        <taxon>Gammaproteobacteria</taxon>
        <taxon>Pseudomonadales</taxon>
        <taxon>Pseudomonadaceae</taxon>
        <taxon>Pseudomonas</taxon>
    </lineage>
</organism>
<dbReference type="EC" id="5.3.1.1" evidence="1"/>
<dbReference type="EMBL" id="AE004091">
    <property type="protein sequence ID" value="AAG08134.1"/>
    <property type="molecule type" value="Genomic_DNA"/>
</dbReference>
<dbReference type="PIR" id="C83053">
    <property type="entry name" value="C83053"/>
</dbReference>
<dbReference type="RefSeq" id="NP_253436.1">
    <property type="nucleotide sequence ID" value="NC_002516.2"/>
</dbReference>
<dbReference type="RefSeq" id="WP_003100513.1">
    <property type="nucleotide sequence ID" value="NZ_QZGE01000018.1"/>
</dbReference>
<dbReference type="SMR" id="Q9HV51"/>
<dbReference type="FunCoup" id="Q9HV51">
    <property type="interactions" value="721"/>
</dbReference>
<dbReference type="STRING" id="208964.PA4748"/>
<dbReference type="PaxDb" id="208964-PA4748"/>
<dbReference type="DNASU" id="881712"/>
<dbReference type="GeneID" id="881712"/>
<dbReference type="KEGG" id="pae:PA4748"/>
<dbReference type="PATRIC" id="fig|208964.12.peg.4974"/>
<dbReference type="PseudoCAP" id="PA4748"/>
<dbReference type="HOGENOM" id="CLU_024251_2_1_6"/>
<dbReference type="InParanoid" id="Q9HV51"/>
<dbReference type="OrthoDB" id="9809429at2"/>
<dbReference type="PhylomeDB" id="Q9HV51"/>
<dbReference type="BioCyc" id="PAER208964:G1FZ6-4860-MONOMER"/>
<dbReference type="UniPathway" id="UPA00109">
    <property type="reaction ID" value="UER00189"/>
</dbReference>
<dbReference type="UniPathway" id="UPA00138"/>
<dbReference type="Proteomes" id="UP000002438">
    <property type="component" value="Chromosome"/>
</dbReference>
<dbReference type="GO" id="GO:0005829">
    <property type="term" value="C:cytosol"/>
    <property type="evidence" value="ECO:0000318"/>
    <property type="project" value="GO_Central"/>
</dbReference>
<dbReference type="GO" id="GO:0004807">
    <property type="term" value="F:triose-phosphate isomerase activity"/>
    <property type="evidence" value="ECO:0000318"/>
    <property type="project" value="GO_Central"/>
</dbReference>
<dbReference type="GO" id="GO:0006094">
    <property type="term" value="P:gluconeogenesis"/>
    <property type="evidence" value="ECO:0000318"/>
    <property type="project" value="GO_Central"/>
</dbReference>
<dbReference type="GO" id="GO:0046166">
    <property type="term" value="P:glyceraldehyde-3-phosphate biosynthetic process"/>
    <property type="evidence" value="ECO:0000318"/>
    <property type="project" value="GO_Central"/>
</dbReference>
<dbReference type="GO" id="GO:0019563">
    <property type="term" value="P:glycerol catabolic process"/>
    <property type="evidence" value="ECO:0000318"/>
    <property type="project" value="GO_Central"/>
</dbReference>
<dbReference type="GO" id="GO:0006096">
    <property type="term" value="P:glycolytic process"/>
    <property type="evidence" value="ECO:0000318"/>
    <property type="project" value="GO_Central"/>
</dbReference>
<dbReference type="CDD" id="cd00311">
    <property type="entry name" value="TIM"/>
    <property type="match status" value="1"/>
</dbReference>
<dbReference type="FunFam" id="3.20.20.70:FF:000016">
    <property type="entry name" value="Triosephosphate isomerase"/>
    <property type="match status" value="1"/>
</dbReference>
<dbReference type="Gene3D" id="3.20.20.70">
    <property type="entry name" value="Aldolase class I"/>
    <property type="match status" value="1"/>
</dbReference>
<dbReference type="HAMAP" id="MF_00147_B">
    <property type="entry name" value="TIM_B"/>
    <property type="match status" value="1"/>
</dbReference>
<dbReference type="InterPro" id="IPR013785">
    <property type="entry name" value="Aldolase_TIM"/>
</dbReference>
<dbReference type="InterPro" id="IPR035990">
    <property type="entry name" value="TIM_sf"/>
</dbReference>
<dbReference type="InterPro" id="IPR022896">
    <property type="entry name" value="TrioseP_Isoase_bac/euk"/>
</dbReference>
<dbReference type="InterPro" id="IPR000652">
    <property type="entry name" value="Triosephosphate_isomerase"/>
</dbReference>
<dbReference type="InterPro" id="IPR020861">
    <property type="entry name" value="Triosephosphate_isomerase_AS"/>
</dbReference>
<dbReference type="NCBIfam" id="TIGR00419">
    <property type="entry name" value="tim"/>
    <property type="match status" value="1"/>
</dbReference>
<dbReference type="PANTHER" id="PTHR21139">
    <property type="entry name" value="TRIOSEPHOSPHATE ISOMERASE"/>
    <property type="match status" value="1"/>
</dbReference>
<dbReference type="PANTHER" id="PTHR21139:SF42">
    <property type="entry name" value="TRIOSEPHOSPHATE ISOMERASE"/>
    <property type="match status" value="1"/>
</dbReference>
<dbReference type="Pfam" id="PF00121">
    <property type="entry name" value="TIM"/>
    <property type="match status" value="1"/>
</dbReference>
<dbReference type="SUPFAM" id="SSF51351">
    <property type="entry name" value="Triosephosphate isomerase (TIM)"/>
    <property type="match status" value="1"/>
</dbReference>
<dbReference type="PROSITE" id="PS00171">
    <property type="entry name" value="TIM_1"/>
    <property type="match status" value="1"/>
</dbReference>
<dbReference type="PROSITE" id="PS51440">
    <property type="entry name" value="TIM_2"/>
    <property type="match status" value="1"/>
</dbReference>